<dbReference type="EMBL" id="CP001068">
    <property type="protein sequence ID" value="ACD26329.1"/>
    <property type="molecule type" value="Genomic_DNA"/>
</dbReference>
<dbReference type="SMR" id="B2UAG7"/>
<dbReference type="STRING" id="402626.Rpic_1185"/>
<dbReference type="KEGG" id="rpi:Rpic_1185"/>
<dbReference type="eggNOG" id="COG0359">
    <property type="taxonomic scope" value="Bacteria"/>
</dbReference>
<dbReference type="HOGENOM" id="CLU_078938_4_1_4"/>
<dbReference type="GO" id="GO:1990904">
    <property type="term" value="C:ribonucleoprotein complex"/>
    <property type="evidence" value="ECO:0007669"/>
    <property type="project" value="UniProtKB-KW"/>
</dbReference>
<dbReference type="GO" id="GO:0005840">
    <property type="term" value="C:ribosome"/>
    <property type="evidence" value="ECO:0007669"/>
    <property type="project" value="UniProtKB-KW"/>
</dbReference>
<dbReference type="GO" id="GO:0019843">
    <property type="term" value="F:rRNA binding"/>
    <property type="evidence" value="ECO:0007669"/>
    <property type="project" value="UniProtKB-UniRule"/>
</dbReference>
<dbReference type="GO" id="GO:0003735">
    <property type="term" value="F:structural constituent of ribosome"/>
    <property type="evidence" value="ECO:0007669"/>
    <property type="project" value="InterPro"/>
</dbReference>
<dbReference type="GO" id="GO:0006412">
    <property type="term" value="P:translation"/>
    <property type="evidence" value="ECO:0007669"/>
    <property type="project" value="UniProtKB-UniRule"/>
</dbReference>
<dbReference type="Gene3D" id="3.10.430.100">
    <property type="entry name" value="Ribosomal protein L9, C-terminal domain"/>
    <property type="match status" value="1"/>
</dbReference>
<dbReference type="Gene3D" id="3.40.5.10">
    <property type="entry name" value="Ribosomal protein L9, N-terminal domain"/>
    <property type="match status" value="1"/>
</dbReference>
<dbReference type="HAMAP" id="MF_00503">
    <property type="entry name" value="Ribosomal_bL9"/>
    <property type="match status" value="1"/>
</dbReference>
<dbReference type="InterPro" id="IPR000244">
    <property type="entry name" value="Ribosomal_bL9"/>
</dbReference>
<dbReference type="InterPro" id="IPR009027">
    <property type="entry name" value="Ribosomal_bL9/RNase_H1_N"/>
</dbReference>
<dbReference type="InterPro" id="IPR020594">
    <property type="entry name" value="Ribosomal_bL9_bac/chp"/>
</dbReference>
<dbReference type="InterPro" id="IPR020069">
    <property type="entry name" value="Ribosomal_bL9_C"/>
</dbReference>
<dbReference type="InterPro" id="IPR036791">
    <property type="entry name" value="Ribosomal_bL9_C_sf"/>
</dbReference>
<dbReference type="InterPro" id="IPR020070">
    <property type="entry name" value="Ribosomal_bL9_N"/>
</dbReference>
<dbReference type="InterPro" id="IPR036935">
    <property type="entry name" value="Ribosomal_bL9_N_sf"/>
</dbReference>
<dbReference type="NCBIfam" id="TIGR00158">
    <property type="entry name" value="L9"/>
    <property type="match status" value="1"/>
</dbReference>
<dbReference type="PANTHER" id="PTHR21368">
    <property type="entry name" value="50S RIBOSOMAL PROTEIN L9"/>
    <property type="match status" value="1"/>
</dbReference>
<dbReference type="Pfam" id="PF03948">
    <property type="entry name" value="Ribosomal_L9_C"/>
    <property type="match status" value="1"/>
</dbReference>
<dbReference type="Pfam" id="PF01281">
    <property type="entry name" value="Ribosomal_L9_N"/>
    <property type="match status" value="1"/>
</dbReference>
<dbReference type="SUPFAM" id="SSF55658">
    <property type="entry name" value="L9 N-domain-like"/>
    <property type="match status" value="1"/>
</dbReference>
<dbReference type="SUPFAM" id="SSF55653">
    <property type="entry name" value="Ribosomal protein L9 C-domain"/>
    <property type="match status" value="1"/>
</dbReference>
<dbReference type="PROSITE" id="PS00651">
    <property type="entry name" value="RIBOSOMAL_L9"/>
    <property type="match status" value="1"/>
</dbReference>
<proteinExistence type="inferred from homology"/>
<sequence>MQIILLEKVVNLGNLGDVVRVKDGYARNFLIPNKQARRATDSAIKEFEARRAELEKLAAEKLAAAQAEGEKLNGLTLQLSQKAGVDGRLFGSVTNHDIADALVAQGFKVEKAQVRMPNGPLKTVGDHPVVVSLHTDVAVDVTVLVQGDAV</sequence>
<protein>
    <recommendedName>
        <fullName evidence="1">Large ribosomal subunit protein bL9</fullName>
    </recommendedName>
    <alternativeName>
        <fullName evidence="2">50S ribosomal protein L9</fullName>
    </alternativeName>
</protein>
<feature type="chain" id="PRO_1000126958" description="Large ribosomal subunit protein bL9">
    <location>
        <begin position="1"/>
        <end position="150"/>
    </location>
</feature>
<accession>B2UAG7</accession>
<name>RL9_RALPJ</name>
<reference key="1">
    <citation type="submission" date="2008-05" db="EMBL/GenBank/DDBJ databases">
        <title>Complete sequence of chromosome 1 of Ralstonia pickettii 12J.</title>
        <authorList>
            <person name="Lucas S."/>
            <person name="Copeland A."/>
            <person name="Lapidus A."/>
            <person name="Glavina del Rio T."/>
            <person name="Dalin E."/>
            <person name="Tice H."/>
            <person name="Bruce D."/>
            <person name="Goodwin L."/>
            <person name="Pitluck S."/>
            <person name="Meincke L."/>
            <person name="Brettin T."/>
            <person name="Detter J.C."/>
            <person name="Han C."/>
            <person name="Kuske C.R."/>
            <person name="Schmutz J."/>
            <person name="Larimer F."/>
            <person name="Land M."/>
            <person name="Hauser L."/>
            <person name="Kyrpides N."/>
            <person name="Mikhailova N."/>
            <person name="Marsh T."/>
            <person name="Richardson P."/>
        </authorList>
    </citation>
    <scope>NUCLEOTIDE SEQUENCE [LARGE SCALE GENOMIC DNA]</scope>
    <source>
        <strain>12J</strain>
    </source>
</reference>
<comment type="function">
    <text evidence="1">Binds to the 23S rRNA.</text>
</comment>
<comment type="similarity">
    <text evidence="1">Belongs to the bacterial ribosomal protein bL9 family.</text>
</comment>
<gene>
    <name evidence="1" type="primary">rplI</name>
    <name type="ordered locus">Rpic_1185</name>
</gene>
<evidence type="ECO:0000255" key="1">
    <source>
        <dbReference type="HAMAP-Rule" id="MF_00503"/>
    </source>
</evidence>
<evidence type="ECO:0000305" key="2"/>
<organism>
    <name type="scientific">Ralstonia pickettii (strain 12J)</name>
    <dbReference type="NCBI Taxonomy" id="402626"/>
    <lineage>
        <taxon>Bacteria</taxon>
        <taxon>Pseudomonadati</taxon>
        <taxon>Pseudomonadota</taxon>
        <taxon>Betaproteobacteria</taxon>
        <taxon>Burkholderiales</taxon>
        <taxon>Burkholderiaceae</taxon>
        <taxon>Ralstonia</taxon>
    </lineage>
</organism>
<keyword id="KW-0687">Ribonucleoprotein</keyword>
<keyword id="KW-0689">Ribosomal protein</keyword>
<keyword id="KW-0694">RNA-binding</keyword>
<keyword id="KW-0699">rRNA-binding</keyword>